<dbReference type="EC" id="6.1.1.21" evidence="1"/>
<dbReference type="EMBL" id="AE009951">
    <property type="protein sequence ID" value="AAL94504.1"/>
    <property type="molecule type" value="Genomic_DNA"/>
</dbReference>
<dbReference type="RefSeq" id="NP_603205.1">
    <property type="nucleotide sequence ID" value="NC_003454.1"/>
</dbReference>
<dbReference type="RefSeq" id="WP_011016292.1">
    <property type="nucleotide sequence ID" value="NZ_OZ209243.1"/>
</dbReference>
<dbReference type="SMR" id="Q8RGJ5"/>
<dbReference type="FunCoup" id="Q8RGJ5">
    <property type="interactions" value="355"/>
</dbReference>
<dbReference type="STRING" id="190304.FN0298"/>
<dbReference type="PaxDb" id="190304-FN0298"/>
<dbReference type="EnsemblBacteria" id="AAL94504">
    <property type="protein sequence ID" value="AAL94504"/>
    <property type="gene ID" value="FN0298"/>
</dbReference>
<dbReference type="GeneID" id="79783307"/>
<dbReference type="KEGG" id="fnu:FN0298"/>
<dbReference type="PATRIC" id="fig|190304.8.peg.878"/>
<dbReference type="eggNOG" id="COG0124">
    <property type="taxonomic scope" value="Bacteria"/>
</dbReference>
<dbReference type="HOGENOM" id="CLU_025113_1_1_0"/>
<dbReference type="InParanoid" id="Q8RGJ5"/>
<dbReference type="BioCyc" id="FNUC190304:G1FZS-895-MONOMER"/>
<dbReference type="Proteomes" id="UP000002521">
    <property type="component" value="Chromosome"/>
</dbReference>
<dbReference type="GO" id="GO:0005737">
    <property type="term" value="C:cytoplasm"/>
    <property type="evidence" value="ECO:0007669"/>
    <property type="project" value="UniProtKB-SubCell"/>
</dbReference>
<dbReference type="GO" id="GO:0005524">
    <property type="term" value="F:ATP binding"/>
    <property type="evidence" value="ECO:0007669"/>
    <property type="project" value="UniProtKB-UniRule"/>
</dbReference>
<dbReference type="GO" id="GO:0004821">
    <property type="term" value="F:histidine-tRNA ligase activity"/>
    <property type="evidence" value="ECO:0000318"/>
    <property type="project" value="GO_Central"/>
</dbReference>
<dbReference type="GO" id="GO:0006427">
    <property type="term" value="P:histidyl-tRNA aminoacylation"/>
    <property type="evidence" value="ECO:0000318"/>
    <property type="project" value="GO_Central"/>
</dbReference>
<dbReference type="CDD" id="cd00773">
    <property type="entry name" value="HisRS-like_core"/>
    <property type="match status" value="1"/>
</dbReference>
<dbReference type="CDD" id="cd00859">
    <property type="entry name" value="HisRS_anticodon"/>
    <property type="match status" value="1"/>
</dbReference>
<dbReference type="FunFam" id="3.30.930.10:FF:000005">
    <property type="entry name" value="Histidine--tRNA ligase"/>
    <property type="match status" value="1"/>
</dbReference>
<dbReference type="Gene3D" id="3.40.50.800">
    <property type="entry name" value="Anticodon-binding domain"/>
    <property type="match status" value="1"/>
</dbReference>
<dbReference type="Gene3D" id="3.30.930.10">
    <property type="entry name" value="Bira Bifunctional Protein, Domain 2"/>
    <property type="match status" value="1"/>
</dbReference>
<dbReference type="HAMAP" id="MF_00127">
    <property type="entry name" value="His_tRNA_synth"/>
    <property type="match status" value="1"/>
</dbReference>
<dbReference type="InterPro" id="IPR006195">
    <property type="entry name" value="aa-tRNA-synth_II"/>
</dbReference>
<dbReference type="InterPro" id="IPR045864">
    <property type="entry name" value="aa-tRNA-synth_II/BPL/LPL"/>
</dbReference>
<dbReference type="InterPro" id="IPR004154">
    <property type="entry name" value="Anticodon-bd"/>
</dbReference>
<dbReference type="InterPro" id="IPR036621">
    <property type="entry name" value="Anticodon-bd_dom_sf"/>
</dbReference>
<dbReference type="InterPro" id="IPR015807">
    <property type="entry name" value="His-tRNA-ligase"/>
</dbReference>
<dbReference type="InterPro" id="IPR041715">
    <property type="entry name" value="HisRS-like_core"/>
</dbReference>
<dbReference type="InterPro" id="IPR004516">
    <property type="entry name" value="HisRS/HisZ"/>
</dbReference>
<dbReference type="InterPro" id="IPR033656">
    <property type="entry name" value="HisRS_anticodon"/>
</dbReference>
<dbReference type="NCBIfam" id="TIGR00442">
    <property type="entry name" value="hisS"/>
    <property type="match status" value="1"/>
</dbReference>
<dbReference type="PANTHER" id="PTHR43707:SF1">
    <property type="entry name" value="HISTIDINE--TRNA LIGASE, MITOCHONDRIAL-RELATED"/>
    <property type="match status" value="1"/>
</dbReference>
<dbReference type="PANTHER" id="PTHR43707">
    <property type="entry name" value="HISTIDYL-TRNA SYNTHETASE"/>
    <property type="match status" value="1"/>
</dbReference>
<dbReference type="Pfam" id="PF03129">
    <property type="entry name" value="HGTP_anticodon"/>
    <property type="match status" value="1"/>
</dbReference>
<dbReference type="Pfam" id="PF13393">
    <property type="entry name" value="tRNA-synt_His"/>
    <property type="match status" value="1"/>
</dbReference>
<dbReference type="PIRSF" id="PIRSF001549">
    <property type="entry name" value="His-tRNA_synth"/>
    <property type="match status" value="1"/>
</dbReference>
<dbReference type="SUPFAM" id="SSF52954">
    <property type="entry name" value="Class II aaRS ABD-related"/>
    <property type="match status" value="1"/>
</dbReference>
<dbReference type="SUPFAM" id="SSF55681">
    <property type="entry name" value="Class II aaRS and biotin synthetases"/>
    <property type="match status" value="1"/>
</dbReference>
<dbReference type="PROSITE" id="PS50862">
    <property type="entry name" value="AA_TRNA_LIGASE_II"/>
    <property type="match status" value="1"/>
</dbReference>
<organism>
    <name type="scientific">Fusobacterium nucleatum subsp. nucleatum (strain ATCC 25586 / DSM 15643 / BCRC 10681 / CIP 101130 / JCM 8532 / KCTC 2640 / LMG 13131 / VPI 4355)</name>
    <dbReference type="NCBI Taxonomy" id="190304"/>
    <lineage>
        <taxon>Bacteria</taxon>
        <taxon>Fusobacteriati</taxon>
        <taxon>Fusobacteriota</taxon>
        <taxon>Fusobacteriia</taxon>
        <taxon>Fusobacteriales</taxon>
        <taxon>Fusobacteriaceae</taxon>
        <taxon>Fusobacterium</taxon>
    </lineage>
</organism>
<sequence length="413" mass="47873">MKLIKAVRGTKDIIGEEAKKYIYISNVAQKMFENYGYNFVKTPIFEETELFKRGIGEATDVVEKEMYTFKDRGDRSITLRPENTASLVRCYLENAIYAKEEISRFYYNGSMFRYERPQAGRQREFNQIGLEVFGEKSPKVDAEVIAIGYKFLEKLGITDLEVKINSVGSKASRTVYREKLIEHFKSHLDDMCEDCRDRINRNPLRLLDCKVDGEKDFYKSAPSIIDYLFEDERKHYDDVKKYLDIFGIKYTEDPTLVRGLDYYSSTVFEIVTNKLGSQGTVLGGGRYDNLLKELGDKDIPAVGFATGVERIMMLLEENYPKNTPDVYIAWLGENTSETALKIAESLRDNDIKVYIDYSEKGMKSHMKKADKLETRYCVILGEDEFNKGIVLLKDFSTREQKEIKIEEIINYIK</sequence>
<reference key="1">
    <citation type="journal article" date="2002" name="J. Bacteriol.">
        <title>Genome sequence and analysis of the oral bacterium Fusobacterium nucleatum strain ATCC 25586.</title>
        <authorList>
            <person name="Kapatral V."/>
            <person name="Anderson I."/>
            <person name="Ivanova N."/>
            <person name="Reznik G."/>
            <person name="Los T."/>
            <person name="Lykidis A."/>
            <person name="Bhattacharyya A."/>
            <person name="Bartman A."/>
            <person name="Gardner W."/>
            <person name="Grechkin G."/>
            <person name="Zhu L."/>
            <person name="Vasieva O."/>
            <person name="Chu L."/>
            <person name="Kogan Y."/>
            <person name="Chaga O."/>
            <person name="Goltsman E."/>
            <person name="Bernal A."/>
            <person name="Larsen N."/>
            <person name="D'Souza M."/>
            <person name="Walunas T."/>
            <person name="Pusch G."/>
            <person name="Haselkorn R."/>
            <person name="Fonstein M."/>
            <person name="Kyrpides N.C."/>
            <person name="Overbeek R."/>
        </authorList>
    </citation>
    <scope>NUCLEOTIDE SEQUENCE [LARGE SCALE GENOMIC DNA]</scope>
    <source>
        <strain>ATCC 25586 / DSM 15643 / BCRC 10681 / CIP 101130 / JCM 8532 / KCTC 2640 / LMG 13131 / VPI 4355</strain>
    </source>
</reference>
<feature type="chain" id="PRO_0000136165" description="Histidine--tRNA ligase">
    <location>
        <begin position="1"/>
        <end position="413"/>
    </location>
</feature>
<keyword id="KW-0030">Aminoacyl-tRNA synthetase</keyword>
<keyword id="KW-0067">ATP-binding</keyword>
<keyword id="KW-0963">Cytoplasm</keyword>
<keyword id="KW-0436">Ligase</keyword>
<keyword id="KW-0547">Nucleotide-binding</keyword>
<keyword id="KW-0648">Protein biosynthesis</keyword>
<keyword id="KW-1185">Reference proteome</keyword>
<gene>
    <name evidence="1" type="primary">hisS</name>
    <name type="ordered locus">FN0298</name>
</gene>
<proteinExistence type="inferred from homology"/>
<name>SYH_FUSNN</name>
<comment type="catalytic activity">
    <reaction evidence="1">
        <text>tRNA(His) + L-histidine + ATP = L-histidyl-tRNA(His) + AMP + diphosphate + H(+)</text>
        <dbReference type="Rhea" id="RHEA:17313"/>
        <dbReference type="Rhea" id="RHEA-COMP:9665"/>
        <dbReference type="Rhea" id="RHEA-COMP:9689"/>
        <dbReference type="ChEBI" id="CHEBI:15378"/>
        <dbReference type="ChEBI" id="CHEBI:30616"/>
        <dbReference type="ChEBI" id="CHEBI:33019"/>
        <dbReference type="ChEBI" id="CHEBI:57595"/>
        <dbReference type="ChEBI" id="CHEBI:78442"/>
        <dbReference type="ChEBI" id="CHEBI:78527"/>
        <dbReference type="ChEBI" id="CHEBI:456215"/>
        <dbReference type="EC" id="6.1.1.21"/>
    </reaction>
</comment>
<comment type="subunit">
    <text evidence="1">Homodimer.</text>
</comment>
<comment type="subcellular location">
    <subcellularLocation>
        <location evidence="1">Cytoplasm</location>
    </subcellularLocation>
</comment>
<comment type="similarity">
    <text evidence="1">Belongs to the class-II aminoacyl-tRNA synthetase family.</text>
</comment>
<accession>Q8RGJ5</accession>
<protein>
    <recommendedName>
        <fullName evidence="1">Histidine--tRNA ligase</fullName>
        <ecNumber evidence="1">6.1.1.21</ecNumber>
    </recommendedName>
    <alternativeName>
        <fullName evidence="1">Histidyl-tRNA synthetase</fullName>
        <shortName evidence="1">HisRS</shortName>
    </alternativeName>
</protein>
<evidence type="ECO:0000255" key="1">
    <source>
        <dbReference type="HAMAP-Rule" id="MF_00127"/>
    </source>
</evidence>